<evidence type="ECO:0000250" key="1"/>
<evidence type="ECO:0000256" key="2">
    <source>
        <dbReference type="SAM" id="MobiDB-lite"/>
    </source>
</evidence>
<evidence type="ECO:0000305" key="3"/>
<keyword id="KW-0156">Chromatin regulator</keyword>
<keyword id="KW-0539">Nucleus</keyword>
<keyword id="KW-0677">Repeat</keyword>
<keyword id="KW-0853">WD repeat</keyword>
<protein>
    <recommendedName>
        <fullName>ASTRA-associated protein 1</fullName>
    </recommendedName>
</protein>
<comment type="function">
    <text evidence="1">Component of the ASTRA complex involved in chromatin remodeling.</text>
</comment>
<comment type="subunit">
    <text evidence="1">Component of the ASTRA chromatin remodeling machinery complex composed of at least RVB1, RVB2, TRA1, TEL2, TTI1 and TTI2.</text>
</comment>
<comment type="subcellular location">
    <subcellularLocation>
        <location evidence="1">Nucleus</location>
    </subcellularLocation>
</comment>
<comment type="similarity">
    <text evidence="3">Belongs to the WD repeat ASA1 family.</text>
</comment>
<comment type="sequence caution" evidence="3">
    <conflict type="erroneous initiation">
        <sequence resource="EMBL-CDS" id="CAY87041"/>
    </conflict>
    <text>Extended N-terminus.</text>
</comment>
<accession>C8ZJB0</accession>
<dbReference type="EMBL" id="FN394217">
    <property type="protein sequence ID" value="CAY87041.1"/>
    <property type="status" value="ALT_INIT"/>
    <property type="molecule type" value="Genomic_DNA"/>
</dbReference>
<dbReference type="HOGENOM" id="CLU_045414_1_0_1"/>
<dbReference type="OrthoDB" id="4569at4893"/>
<dbReference type="Proteomes" id="UP000000286">
    <property type="component" value="Chromosome XVI, Scaffold EC1118_1P2"/>
</dbReference>
<dbReference type="GO" id="GO:0005634">
    <property type="term" value="C:nucleus"/>
    <property type="evidence" value="ECO:0007669"/>
    <property type="project" value="UniProtKB-SubCell"/>
</dbReference>
<dbReference type="GO" id="GO:0006325">
    <property type="term" value="P:chromatin organization"/>
    <property type="evidence" value="ECO:0007669"/>
    <property type="project" value="UniProtKB-KW"/>
</dbReference>
<dbReference type="Gene3D" id="2.130.10.10">
    <property type="entry name" value="YVTN repeat-like/Quinoprotein amine dehydrogenase"/>
    <property type="match status" value="1"/>
</dbReference>
<dbReference type="InterPro" id="IPR015943">
    <property type="entry name" value="WD40/YVTN_repeat-like_dom_sf"/>
</dbReference>
<dbReference type="InterPro" id="IPR036322">
    <property type="entry name" value="WD40_repeat_dom_sf"/>
</dbReference>
<dbReference type="PANTHER" id="PTHR19854:SF1">
    <property type="entry name" value="GUANINE NUCLEOTIDE-BINDING PROTEIN SUBUNIT BETA-LIKE PROTEIN 1"/>
    <property type="match status" value="1"/>
</dbReference>
<dbReference type="PANTHER" id="PTHR19854">
    <property type="entry name" value="TRANSDUCIN BETA-LIKE 3"/>
    <property type="match status" value="1"/>
</dbReference>
<dbReference type="SUPFAM" id="SSF50978">
    <property type="entry name" value="WD40 repeat-like"/>
    <property type="match status" value="1"/>
</dbReference>
<sequence length="443" mass="50563">MRGFSNEIILKRTLTLSDFTLRYHKRGITALQVIKAPSVSNVPVLLSGDNYGYFVMWDLVTKRPITHIEIEGNSHIIAFWWVETTNVLYILSKDSMLRIFELDSSTQLSIDLVRKLSQANKTDHLQWTKIYEMPINTLNFANFIIEAEVKPTKDNKSYRLVCCHTDDSETIDIYQIIEDSTFKLKRPFNNINFPRFLKQQNFLGISKDSKFGIIMRFAKLNDVIFLGYENGFVVGFKITFDEGLQRDIAELVHVSNDHYPNPILDMCVSGDELYSCSTDDFITKYKIPVNLQLETKYLRDDALLIKCPSSLRVSEPSKVHLPLKNIGHIDKVKDDYLVVSSWSGMTIVYNMRTSEVEQTFVKSKNNLVVSDSSMGDLTNGSGSNTESSSKSHNYKVGAMTCLESFDVQSDGLRLGQLRRIKALAKCNWCLIGYEDGTIKLNKI</sequence>
<feature type="chain" id="PRO_0000402228" description="ASTRA-associated protein 1">
    <location>
        <begin position="1"/>
        <end position="443"/>
    </location>
</feature>
<feature type="repeat" description="WD 1">
    <location>
        <begin position="23"/>
        <end position="67"/>
    </location>
</feature>
<feature type="repeat" description="WD 2">
    <location>
        <begin position="71"/>
        <end position="110"/>
    </location>
</feature>
<feature type="repeat" description="WD 3">
    <location>
        <begin position="258"/>
        <end position="295"/>
    </location>
</feature>
<feature type="repeat" description="WD 4">
    <location>
        <begin position="318"/>
        <end position="359"/>
    </location>
</feature>
<feature type="region of interest" description="Disordered" evidence="2">
    <location>
        <begin position="372"/>
        <end position="391"/>
    </location>
</feature>
<feature type="compositionally biased region" description="Low complexity" evidence="2">
    <location>
        <begin position="378"/>
        <end position="391"/>
    </location>
</feature>
<gene>
    <name type="primary">ASA1</name>
    <name type="ORF">EC1118_1P2_4093g</name>
</gene>
<organism>
    <name type="scientific">Saccharomyces cerevisiae (strain Lalvin EC1118 / Prise de mousse)</name>
    <name type="common">Baker's yeast</name>
    <dbReference type="NCBI Taxonomy" id="643680"/>
    <lineage>
        <taxon>Eukaryota</taxon>
        <taxon>Fungi</taxon>
        <taxon>Dikarya</taxon>
        <taxon>Ascomycota</taxon>
        <taxon>Saccharomycotina</taxon>
        <taxon>Saccharomycetes</taxon>
        <taxon>Saccharomycetales</taxon>
        <taxon>Saccharomycetaceae</taxon>
        <taxon>Saccharomyces</taxon>
    </lineage>
</organism>
<proteinExistence type="inferred from homology"/>
<reference key="1">
    <citation type="journal article" date="2009" name="Proc. Natl. Acad. Sci. U.S.A.">
        <title>Eukaryote-to-eukaryote gene transfer events revealed by the genome sequence of the wine yeast Saccharomyces cerevisiae EC1118.</title>
        <authorList>
            <person name="Novo M."/>
            <person name="Bigey F."/>
            <person name="Beyne E."/>
            <person name="Galeote V."/>
            <person name="Gavory F."/>
            <person name="Mallet S."/>
            <person name="Cambon B."/>
            <person name="Legras J.-L."/>
            <person name="Wincker P."/>
            <person name="Casaregola S."/>
            <person name="Dequin S."/>
        </authorList>
    </citation>
    <scope>NUCLEOTIDE SEQUENCE [LARGE SCALE GENOMIC DNA]</scope>
    <source>
        <strain>Lalvin EC1118 / Prise de mousse</strain>
    </source>
</reference>
<name>ASA1_YEAS8</name>